<accession>P82470</accession>
<feature type="peptide" id="PRO_0000044447" description="Tachykinin-1">
    <location>
        <begin position="1"/>
        <end position="14"/>
    </location>
</feature>
<feature type="modified residue" description="Arginine amide" evidence="1">
    <location>
        <position position="14"/>
    </location>
</feature>
<sequence>GNTKKAVPGFYGTR</sequence>
<protein>
    <recommendedName>
        <fullName>Tachykinin-1</fullName>
    </recommendedName>
    <alternativeName>
        <fullName>Scg-midgut-TK</fullName>
    </alternativeName>
</protein>
<keyword id="KW-0027">Amidation</keyword>
<keyword id="KW-0903">Direct protein sequencing</keyword>
<keyword id="KW-0527">Neuropeptide</keyword>
<keyword id="KW-0964">Secreted</keyword>
<comment type="function">
    <text>Myoactive peptide. Increases the amplitude and frequency of spontaneous contractions and tonus of hindgut muscle.</text>
</comment>
<comment type="subcellular location">
    <subcellularLocation>
        <location>Secreted</location>
    </subcellularLocation>
</comment>
<comment type="tissue specificity">
    <text>Midgut.</text>
</comment>
<comment type="mass spectrometry"/>
<proteinExistence type="evidence at protein level"/>
<dbReference type="GO" id="GO:0005576">
    <property type="term" value="C:extracellular region"/>
    <property type="evidence" value="ECO:0007669"/>
    <property type="project" value="UniProtKB-SubCell"/>
</dbReference>
<dbReference type="GO" id="GO:0007218">
    <property type="term" value="P:neuropeptide signaling pathway"/>
    <property type="evidence" value="ECO:0007669"/>
    <property type="project" value="UniProtKB-KW"/>
</dbReference>
<organism>
    <name type="scientific">Schistocerca gregaria</name>
    <name type="common">Desert locust</name>
    <name type="synonym">Gryllus gregarius</name>
    <dbReference type="NCBI Taxonomy" id="7010"/>
    <lineage>
        <taxon>Eukaryota</taxon>
        <taxon>Metazoa</taxon>
        <taxon>Ecdysozoa</taxon>
        <taxon>Arthropoda</taxon>
        <taxon>Hexapoda</taxon>
        <taxon>Insecta</taxon>
        <taxon>Pterygota</taxon>
        <taxon>Neoptera</taxon>
        <taxon>Polyneoptera</taxon>
        <taxon>Orthoptera</taxon>
        <taxon>Caelifera</taxon>
        <taxon>Acrididea</taxon>
        <taxon>Acridomorpha</taxon>
        <taxon>Acridoidea</taxon>
        <taxon>Acrididae</taxon>
        <taxon>Cyrtacanthacridinae</taxon>
        <taxon>Schistocerca</taxon>
    </lineage>
</organism>
<reference key="1">
    <citation type="journal article" date="1999" name="Biochem. Biophys. Res. Commun.">
        <title>Identification of a new tachykinin from the midgut of the desert locust, Schistocerca gregaria, by ESI-Qq-oa-TOF mass spectrometry.</title>
        <authorList>
            <person name="Veelaert D."/>
            <person name="Baggerman G."/>
            <person name="Derua R."/>
            <person name="Waelkens E."/>
            <person name="Meeusen T."/>
            <person name="Vande Water G."/>
            <person name="De Loof A."/>
            <person name="Schoofs L."/>
        </authorList>
    </citation>
    <scope>PROTEIN SEQUENCE</scope>
    <scope>AMIDATION AT ARG-14</scope>
    <scope>MASS SPECTROMETRY</scope>
    <source>
        <tissue>Midgut</tissue>
    </source>
</reference>
<name>TKN1_SCHGR</name>
<evidence type="ECO:0000269" key="1">
    <source>
    </source>
</evidence>